<comment type="subcellular location">
    <subcellularLocation>
        <location evidence="1">Secreted</location>
    </subcellularLocation>
</comment>
<comment type="tissue specificity">
    <text>Expressed by the venom duct.</text>
</comment>
<comment type="domain">
    <text evidence="1">The presence of a 'disulfide through disulfide knot' structurally defines this protein as a knottin.</text>
</comment>
<comment type="domain">
    <text>The cysteine framework is VI/VII (C-C-CC-C-C).</text>
</comment>
<comment type="similarity">
    <text evidence="3">Belongs to the conotoxin O1 superfamily.</text>
</comment>
<proteinExistence type="evidence at transcript level"/>
<protein>
    <recommendedName>
        <fullName>Conotoxin ArMKLT2-022</fullName>
    </recommendedName>
</protein>
<evidence type="ECO:0000250" key="1"/>
<evidence type="ECO:0000255" key="2"/>
<evidence type="ECO:0000305" key="3"/>
<sequence>MKLTCVLIIAVLFLTACQLTTGEQKDHAQRSADRNSKLTRQCTPVGGSCSRHYHCCSLYCNKNIGQCLATSYP</sequence>
<reference key="1">
    <citation type="journal article" date="2001" name="Mol. Biol. Evol.">
        <title>Mechanisms for evolving hypervariability: the case of conopeptides.</title>
        <authorList>
            <person name="Conticello S.G."/>
            <person name="Gilad Y."/>
            <person name="Avidan N."/>
            <person name="Ben-Asher E."/>
            <person name="Levy Z."/>
            <person name="Fainzilber M."/>
        </authorList>
    </citation>
    <scope>NUCLEOTIDE SEQUENCE [MRNA]</scope>
    <source>
        <tissue>Venom duct</tissue>
    </source>
</reference>
<name>O1617_CONAE</name>
<organism>
    <name type="scientific">Conus arenatus</name>
    <name type="common">Sand-dusted cone</name>
    <dbReference type="NCBI Taxonomy" id="89451"/>
    <lineage>
        <taxon>Eukaryota</taxon>
        <taxon>Metazoa</taxon>
        <taxon>Spiralia</taxon>
        <taxon>Lophotrochozoa</taxon>
        <taxon>Mollusca</taxon>
        <taxon>Gastropoda</taxon>
        <taxon>Caenogastropoda</taxon>
        <taxon>Neogastropoda</taxon>
        <taxon>Conoidea</taxon>
        <taxon>Conidae</taxon>
        <taxon>Conus</taxon>
    </lineage>
</organism>
<dbReference type="EMBL" id="AF215059">
    <property type="protein sequence ID" value="AAG60487.1"/>
    <property type="molecule type" value="mRNA"/>
</dbReference>
<dbReference type="SMR" id="Q9BP79"/>
<dbReference type="ConoServer" id="746">
    <property type="toxin name" value="Ar6.17 precursor"/>
</dbReference>
<dbReference type="GO" id="GO:0005576">
    <property type="term" value="C:extracellular region"/>
    <property type="evidence" value="ECO:0007669"/>
    <property type="project" value="UniProtKB-SubCell"/>
</dbReference>
<dbReference type="GO" id="GO:0008200">
    <property type="term" value="F:ion channel inhibitor activity"/>
    <property type="evidence" value="ECO:0007669"/>
    <property type="project" value="InterPro"/>
</dbReference>
<dbReference type="GO" id="GO:0090729">
    <property type="term" value="F:toxin activity"/>
    <property type="evidence" value="ECO:0007669"/>
    <property type="project" value="UniProtKB-KW"/>
</dbReference>
<dbReference type="InterPro" id="IPR004214">
    <property type="entry name" value="Conotoxin"/>
</dbReference>
<dbReference type="Pfam" id="PF02950">
    <property type="entry name" value="Conotoxin"/>
    <property type="match status" value="1"/>
</dbReference>
<accession>Q9BP79</accession>
<keyword id="KW-1015">Disulfide bond</keyword>
<keyword id="KW-0960">Knottin</keyword>
<keyword id="KW-0528">Neurotoxin</keyword>
<keyword id="KW-0873">Pyrrolidone carboxylic acid</keyword>
<keyword id="KW-0964">Secreted</keyword>
<keyword id="KW-0732">Signal</keyword>
<keyword id="KW-0800">Toxin</keyword>
<feature type="signal peptide" evidence="2">
    <location>
        <begin position="1"/>
        <end position="22"/>
    </location>
</feature>
<feature type="propeptide" id="PRO_0000404752" evidence="1">
    <location>
        <begin position="23"/>
        <end position="40"/>
    </location>
</feature>
<feature type="peptide" id="PRO_0000404753" description="Conotoxin ArMKLT2-022">
    <location>
        <begin position="41"/>
        <end position="73"/>
    </location>
</feature>
<feature type="modified residue" description="Pyrrolidone carboxylic acid" evidence="1">
    <location>
        <position position="41"/>
    </location>
</feature>
<feature type="disulfide bond" evidence="1">
    <location>
        <begin position="42"/>
        <end position="56"/>
    </location>
</feature>
<feature type="disulfide bond" evidence="1">
    <location>
        <begin position="49"/>
        <end position="60"/>
    </location>
</feature>
<feature type="disulfide bond" evidence="1">
    <location>
        <begin position="55"/>
        <end position="67"/>
    </location>
</feature>